<reference key="1">
    <citation type="journal article" date="2005" name="Nature">
        <title>The genome of the social amoeba Dictyostelium discoideum.</title>
        <authorList>
            <person name="Eichinger L."/>
            <person name="Pachebat J.A."/>
            <person name="Gloeckner G."/>
            <person name="Rajandream M.A."/>
            <person name="Sucgang R."/>
            <person name="Berriman M."/>
            <person name="Song J."/>
            <person name="Olsen R."/>
            <person name="Szafranski K."/>
            <person name="Xu Q."/>
            <person name="Tunggal B."/>
            <person name="Kummerfeld S."/>
            <person name="Madera M."/>
            <person name="Konfortov B.A."/>
            <person name="Rivero F."/>
            <person name="Bankier A.T."/>
            <person name="Lehmann R."/>
            <person name="Hamlin N."/>
            <person name="Davies R."/>
            <person name="Gaudet P."/>
            <person name="Fey P."/>
            <person name="Pilcher K."/>
            <person name="Chen G."/>
            <person name="Saunders D."/>
            <person name="Sodergren E.J."/>
            <person name="Davis P."/>
            <person name="Kerhornou A."/>
            <person name="Nie X."/>
            <person name="Hall N."/>
            <person name="Anjard C."/>
            <person name="Hemphill L."/>
            <person name="Bason N."/>
            <person name="Farbrother P."/>
            <person name="Desany B."/>
            <person name="Just E."/>
            <person name="Morio T."/>
            <person name="Rost R."/>
            <person name="Churcher C.M."/>
            <person name="Cooper J."/>
            <person name="Haydock S."/>
            <person name="van Driessche N."/>
            <person name="Cronin A."/>
            <person name="Goodhead I."/>
            <person name="Muzny D.M."/>
            <person name="Mourier T."/>
            <person name="Pain A."/>
            <person name="Lu M."/>
            <person name="Harper D."/>
            <person name="Lindsay R."/>
            <person name="Hauser H."/>
            <person name="James K.D."/>
            <person name="Quiles M."/>
            <person name="Madan Babu M."/>
            <person name="Saito T."/>
            <person name="Buchrieser C."/>
            <person name="Wardroper A."/>
            <person name="Felder M."/>
            <person name="Thangavelu M."/>
            <person name="Johnson D."/>
            <person name="Knights A."/>
            <person name="Loulseged H."/>
            <person name="Mungall K.L."/>
            <person name="Oliver K."/>
            <person name="Price C."/>
            <person name="Quail M.A."/>
            <person name="Urushihara H."/>
            <person name="Hernandez J."/>
            <person name="Rabbinowitsch E."/>
            <person name="Steffen D."/>
            <person name="Sanders M."/>
            <person name="Ma J."/>
            <person name="Kohara Y."/>
            <person name="Sharp S."/>
            <person name="Simmonds M.N."/>
            <person name="Spiegler S."/>
            <person name="Tivey A."/>
            <person name="Sugano S."/>
            <person name="White B."/>
            <person name="Walker D."/>
            <person name="Woodward J.R."/>
            <person name="Winckler T."/>
            <person name="Tanaka Y."/>
            <person name="Shaulsky G."/>
            <person name="Schleicher M."/>
            <person name="Weinstock G.M."/>
            <person name="Rosenthal A."/>
            <person name="Cox E.C."/>
            <person name="Chisholm R.L."/>
            <person name="Gibbs R.A."/>
            <person name="Loomis W.F."/>
            <person name="Platzer M."/>
            <person name="Kay R.R."/>
            <person name="Williams J.G."/>
            <person name="Dear P.H."/>
            <person name="Noegel A.A."/>
            <person name="Barrell B.G."/>
            <person name="Kuspa A."/>
        </authorList>
    </citation>
    <scope>NUCLEOTIDE SEQUENCE [LARGE SCALE GENOMIC DNA]</scope>
    <source>
        <strain>AX4</strain>
    </source>
</reference>
<name>ATG18_DICDI</name>
<gene>
    <name type="primary">atg18</name>
    <name type="synonym">wipi2</name>
    <name type="ORF">DDB_G0285375</name>
</gene>
<accession>Q54NA2</accession>
<sequence>MNVGGKFNEGILFLNFNQDFSCIAVGTPEGYKIFNSDPYTLYYSQSNGGAGLVEMLFSTSLVSIVGSGDGNTSQRRLLINNIKNNIPICDLNFVTAILSVKMNRKRIVVIMETKIHIYDINNMKLLETREIASNPKGLCALSPSNTNYIVYPASQNNGNILVMDVLTLETVNLIQAHKSQISALALSQDGTLLATASDKGTVIRVFALPYANKSLSFRRGSIPAIIHSMTFSLDGRYLCVSSDTGTIHIFKIDFSSSNSSSFHQAQPSSSPSGGMMGLNFGGLTSKMSSYLPEVISQVWEPSRDFAHIKIPPGIPSICALMQNNKTAMVLTADSLYMQYNFDESVGGELKLAKEFSLLMEPDLDNDVTAKIL</sequence>
<comment type="function">
    <text evidence="1">May be involved in cytoplasm to vacuole transport and autophagy.</text>
</comment>
<comment type="subcellular location">
    <subcellularLocation>
        <location evidence="1">Preautophagosomal structure membrane</location>
        <topology evidence="1">Peripheral membrane protein</topology>
    </subcellularLocation>
    <subcellularLocation>
        <location evidence="1">Vacuole membrane</location>
        <topology evidence="1">Peripheral membrane protein</topology>
    </subcellularLocation>
</comment>
<comment type="similarity">
    <text evidence="2">Belongs to the WD repeat PROPPIN family.</text>
</comment>
<evidence type="ECO:0000250" key="1"/>
<evidence type="ECO:0000305" key="2"/>
<protein>
    <recommendedName>
        <fullName>Autophagy-related protein 18</fullName>
    </recommendedName>
    <alternativeName>
        <fullName>WD repeat domain phosphoinositide-interacting protein 2 homolog</fullName>
    </alternativeName>
</protein>
<organism>
    <name type="scientific">Dictyostelium discoideum</name>
    <name type="common">Social amoeba</name>
    <dbReference type="NCBI Taxonomy" id="44689"/>
    <lineage>
        <taxon>Eukaryota</taxon>
        <taxon>Amoebozoa</taxon>
        <taxon>Evosea</taxon>
        <taxon>Eumycetozoa</taxon>
        <taxon>Dictyostelia</taxon>
        <taxon>Dictyosteliales</taxon>
        <taxon>Dictyosteliaceae</taxon>
        <taxon>Dictyostelium</taxon>
    </lineage>
</organism>
<feature type="chain" id="PRO_0000342025" description="Autophagy-related protein 18">
    <location>
        <begin position="1"/>
        <end position="372"/>
    </location>
</feature>
<feature type="repeat" description="WD 1">
    <location>
        <begin position="176"/>
        <end position="216"/>
    </location>
</feature>
<feature type="repeat" description="WD 2">
    <location>
        <begin position="221"/>
        <end position="260"/>
    </location>
</feature>
<dbReference type="EMBL" id="AAFI02000079">
    <property type="protein sequence ID" value="EAL64762.1"/>
    <property type="molecule type" value="Genomic_DNA"/>
</dbReference>
<dbReference type="RefSeq" id="XP_638278.1">
    <property type="nucleotide sequence ID" value="XM_633186.1"/>
</dbReference>
<dbReference type="SMR" id="Q54NA2"/>
<dbReference type="FunCoup" id="Q54NA2">
    <property type="interactions" value="475"/>
</dbReference>
<dbReference type="STRING" id="44689.Q54NA2"/>
<dbReference type="PaxDb" id="44689-DDB0235215"/>
<dbReference type="EnsemblProtists" id="EAL64762">
    <property type="protein sequence ID" value="EAL64762"/>
    <property type="gene ID" value="DDB_G0285375"/>
</dbReference>
<dbReference type="GeneID" id="8625086"/>
<dbReference type="KEGG" id="ddi:DDB_G0285375"/>
<dbReference type="dictyBase" id="DDB_G0285375">
    <property type="gene designation" value="atg18"/>
</dbReference>
<dbReference type="VEuPathDB" id="AmoebaDB:DDB_G0285375"/>
<dbReference type="eggNOG" id="KOG2110">
    <property type="taxonomic scope" value="Eukaryota"/>
</dbReference>
<dbReference type="HOGENOM" id="CLU_025895_5_2_1"/>
<dbReference type="InParanoid" id="Q54NA2"/>
<dbReference type="OMA" id="NIAILEM"/>
<dbReference type="PhylomeDB" id="Q54NA2"/>
<dbReference type="Reactome" id="R-DDI-1632852">
    <property type="pathway name" value="Macroautophagy"/>
</dbReference>
<dbReference type="PRO" id="PR:Q54NA2"/>
<dbReference type="Proteomes" id="UP000002195">
    <property type="component" value="Chromosome 4"/>
</dbReference>
<dbReference type="GO" id="GO:0005829">
    <property type="term" value="C:cytosol"/>
    <property type="evidence" value="ECO:0000250"/>
    <property type="project" value="dictyBase"/>
</dbReference>
<dbReference type="GO" id="GO:0034045">
    <property type="term" value="C:phagophore assembly site membrane"/>
    <property type="evidence" value="ECO:0000318"/>
    <property type="project" value="GO_Central"/>
</dbReference>
<dbReference type="GO" id="GO:0005774">
    <property type="term" value="C:vacuolar membrane"/>
    <property type="evidence" value="ECO:0007669"/>
    <property type="project" value="UniProtKB-SubCell"/>
</dbReference>
<dbReference type="GO" id="GO:0035091">
    <property type="term" value="F:phosphatidylinositol binding"/>
    <property type="evidence" value="ECO:0000250"/>
    <property type="project" value="dictyBase"/>
</dbReference>
<dbReference type="GO" id="GO:0080025">
    <property type="term" value="F:phosphatidylinositol-3,5-bisphosphate binding"/>
    <property type="evidence" value="ECO:0000318"/>
    <property type="project" value="GO_Central"/>
</dbReference>
<dbReference type="GO" id="GO:0032266">
    <property type="term" value="F:phosphatidylinositol-3-phosphate binding"/>
    <property type="evidence" value="ECO:0000318"/>
    <property type="project" value="GO_Central"/>
</dbReference>
<dbReference type="GO" id="GO:0030674">
    <property type="term" value="F:protein-macromolecule adaptor activity"/>
    <property type="evidence" value="ECO:0000318"/>
    <property type="project" value="GO_Central"/>
</dbReference>
<dbReference type="GO" id="GO:0006914">
    <property type="term" value="P:autophagy"/>
    <property type="evidence" value="ECO:0000250"/>
    <property type="project" value="dictyBase"/>
</dbReference>
<dbReference type="GO" id="GO:0000422">
    <property type="term" value="P:autophagy of mitochondrion"/>
    <property type="evidence" value="ECO:0000318"/>
    <property type="project" value="GO_Central"/>
</dbReference>
<dbReference type="GO" id="GO:0061723">
    <property type="term" value="P:glycophagy"/>
    <property type="evidence" value="ECO:0000318"/>
    <property type="project" value="GO_Central"/>
</dbReference>
<dbReference type="GO" id="GO:0044804">
    <property type="term" value="P:nucleophagy"/>
    <property type="evidence" value="ECO:0000318"/>
    <property type="project" value="GO_Central"/>
</dbReference>
<dbReference type="GO" id="GO:0000425">
    <property type="term" value="P:pexophagy"/>
    <property type="evidence" value="ECO:0000318"/>
    <property type="project" value="GO_Central"/>
</dbReference>
<dbReference type="GO" id="GO:0034497">
    <property type="term" value="P:protein localization to phagophore assembly site"/>
    <property type="evidence" value="ECO:0000318"/>
    <property type="project" value="GO_Central"/>
</dbReference>
<dbReference type="GO" id="GO:0015031">
    <property type="term" value="P:protein transport"/>
    <property type="evidence" value="ECO:0007669"/>
    <property type="project" value="UniProtKB-KW"/>
</dbReference>
<dbReference type="FunFam" id="2.130.10.10:FF:000397">
    <property type="entry name" value="Autophagy-related protein 18"/>
    <property type="match status" value="1"/>
</dbReference>
<dbReference type="Gene3D" id="2.130.10.10">
    <property type="entry name" value="YVTN repeat-like/Quinoprotein amine dehydrogenase"/>
    <property type="match status" value="1"/>
</dbReference>
<dbReference type="InterPro" id="IPR048720">
    <property type="entry name" value="PROPPIN"/>
</dbReference>
<dbReference type="InterPro" id="IPR015943">
    <property type="entry name" value="WD40/YVTN_repeat-like_dom_sf"/>
</dbReference>
<dbReference type="InterPro" id="IPR036322">
    <property type="entry name" value="WD40_repeat_dom_sf"/>
</dbReference>
<dbReference type="InterPro" id="IPR001680">
    <property type="entry name" value="WD40_rpt"/>
</dbReference>
<dbReference type="PANTHER" id="PTHR11227">
    <property type="entry name" value="WD-REPEAT PROTEIN INTERACTING WITH PHOSPHOINOSIDES WIPI -RELATED"/>
    <property type="match status" value="1"/>
</dbReference>
<dbReference type="Pfam" id="PF21032">
    <property type="entry name" value="PROPPIN"/>
    <property type="match status" value="1"/>
</dbReference>
<dbReference type="SMART" id="SM00320">
    <property type="entry name" value="WD40"/>
    <property type="match status" value="2"/>
</dbReference>
<dbReference type="SUPFAM" id="SSF50978">
    <property type="entry name" value="WD40 repeat-like"/>
    <property type="match status" value="1"/>
</dbReference>
<proteinExistence type="inferred from homology"/>
<keyword id="KW-0072">Autophagy</keyword>
<keyword id="KW-0472">Membrane</keyword>
<keyword id="KW-0653">Protein transport</keyword>
<keyword id="KW-1185">Reference proteome</keyword>
<keyword id="KW-0677">Repeat</keyword>
<keyword id="KW-0813">Transport</keyword>
<keyword id="KW-0926">Vacuole</keyword>
<keyword id="KW-0853">WD repeat</keyword>